<gene>
    <name type="primary">mknk1</name>
    <name type="synonym">mnk1</name>
</gene>
<sequence>MVSSQPVPFDDGGKRRKKKRKTRAMESFTGKFADLYRLTDELLGEGAYAKVQGCVSLQNGKDYAVKIVEKKAGHSRSRVFREVETLYQCQGNKNILELIEFCEDDARFYLVFEKLLGGSILSHIQKRKHFNEREASKVVKDIASALDFLHTKGIAHRDLKPENILCEFKDKVSPVKICDFDLGSGVKLNSACTTITTPELTTPCGSAEYMAPEVVEVFTEEATFYDKRCDLWSLGVILYIMLSGYPPFVGNCGTDCGWDRGEVCRVCQNKLFESIQEGKYEFPEKDWSHISISAKDLISKLLVRDAKERLSAFQVLQHPWLQGDAPERGLPTPLVLQRNSSTKDLTIFAAEAIAFNRQLSQHDNDLNEEDESFIHAVCSMRLSPPSKSRLAKRRAQAHARKGGSHPTHSTVTASQGTP</sequence>
<comment type="function">
    <text evidence="1">May play a role in the response to environmental stress and cytokines. Appears to regulate translation by phosphorylating EIF4E, thus increasing the affinity of this protein for the 7-methylguanosine-containing mRNA cap (By similarity).</text>
</comment>
<comment type="catalytic activity">
    <reaction evidence="2">
        <text>L-seryl-[protein] + ATP = O-phospho-L-seryl-[protein] + ADP + H(+)</text>
        <dbReference type="Rhea" id="RHEA:17989"/>
        <dbReference type="Rhea" id="RHEA-COMP:9863"/>
        <dbReference type="Rhea" id="RHEA-COMP:11604"/>
        <dbReference type="ChEBI" id="CHEBI:15378"/>
        <dbReference type="ChEBI" id="CHEBI:29999"/>
        <dbReference type="ChEBI" id="CHEBI:30616"/>
        <dbReference type="ChEBI" id="CHEBI:83421"/>
        <dbReference type="ChEBI" id="CHEBI:456216"/>
        <dbReference type="EC" id="2.7.11.1"/>
    </reaction>
</comment>
<comment type="catalytic activity">
    <reaction evidence="2">
        <text>L-threonyl-[protein] + ATP = O-phospho-L-threonyl-[protein] + ADP + H(+)</text>
        <dbReference type="Rhea" id="RHEA:46608"/>
        <dbReference type="Rhea" id="RHEA-COMP:11060"/>
        <dbReference type="Rhea" id="RHEA-COMP:11605"/>
        <dbReference type="ChEBI" id="CHEBI:15378"/>
        <dbReference type="ChEBI" id="CHEBI:30013"/>
        <dbReference type="ChEBI" id="CHEBI:30616"/>
        <dbReference type="ChEBI" id="CHEBI:61977"/>
        <dbReference type="ChEBI" id="CHEBI:456216"/>
        <dbReference type="EC" id="2.7.11.1"/>
    </reaction>
</comment>
<comment type="cofactor">
    <cofactor evidence="2">
        <name>Mg(2+)</name>
        <dbReference type="ChEBI" id="CHEBI:18420"/>
    </cofactor>
</comment>
<comment type="similarity">
    <text evidence="6">Belongs to the protein kinase superfamily. CAMK Ser/Thr protein kinase family.</text>
</comment>
<comment type="sequence caution" evidence="6">
    <conflict type="erroneous initiation">
        <sequence resource="EMBL-CDS" id="BAA75304"/>
    </conflict>
</comment>
<keyword id="KW-0067">ATP-binding</keyword>
<keyword id="KW-0418">Kinase</keyword>
<keyword id="KW-0460">Magnesium</keyword>
<keyword id="KW-0479">Metal-binding</keyword>
<keyword id="KW-0547">Nucleotide-binding</keyword>
<keyword id="KW-1185">Reference proteome</keyword>
<keyword id="KW-0723">Serine/threonine-protein kinase</keyword>
<keyword id="KW-0808">Transferase</keyword>
<keyword id="KW-0810">Translation regulation</keyword>
<accession>Q9YGW0</accession>
<accession>Q66KH6</accession>
<dbReference type="EC" id="2.7.11.1" evidence="2"/>
<dbReference type="EMBL" id="AB023807">
    <property type="protein sequence ID" value="BAA75304.1"/>
    <property type="status" value="ALT_INIT"/>
    <property type="molecule type" value="mRNA"/>
</dbReference>
<dbReference type="EMBL" id="BC080389">
    <property type="protein sequence ID" value="AAH80389.1"/>
    <property type="molecule type" value="mRNA"/>
</dbReference>
<dbReference type="RefSeq" id="NP_001080920.1">
    <property type="nucleotide sequence ID" value="NM_001087451.1"/>
</dbReference>
<dbReference type="RefSeq" id="XP_018114929.1">
    <property type="nucleotide sequence ID" value="XM_018259440.1"/>
</dbReference>
<dbReference type="SMR" id="Q9YGW0"/>
<dbReference type="GeneID" id="387327"/>
<dbReference type="KEGG" id="xla:387327"/>
<dbReference type="AGR" id="Xenbase:XB-GENE-979975"/>
<dbReference type="CTD" id="387327"/>
<dbReference type="Xenbase" id="XB-GENE-979975">
    <property type="gene designation" value="mknk1.S"/>
</dbReference>
<dbReference type="OrthoDB" id="5794026at2759"/>
<dbReference type="Proteomes" id="UP000186698">
    <property type="component" value="Chromosome 4S"/>
</dbReference>
<dbReference type="Bgee" id="387327">
    <property type="expression patterns" value="Expressed in egg cell and 19 other cell types or tissues"/>
</dbReference>
<dbReference type="GO" id="GO:0005737">
    <property type="term" value="C:cytoplasm"/>
    <property type="evidence" value="ECO:0000318"/>
    <property type="project" value="GO_Central"/>
</dbReference>
<dbReference type="GO" id="GO:0005634">
    <property type="term" value="C:nucleus"/>
    <property type="evidence" value="ECO:0000318"/>
    <property type="project" value="GO_Central"/>
</dbReference>
<dbReference type="GO" id="GO:0005524">
    <property type="term" value="F:ATP binding"/>
    <property type="evidence" value="ECO:0007669"/>
    <property type="project" value="UniProtKB-KW"/>
</dbReference>
<dbReference type="GO" id="GO:0009931">
    <property type="term" value="F:calcium-dependent protein serine/threonine kinase activity"/>
    <property type="evidence" value="ECO:0000318"/>
    <property type="project" value="GO_Central"/>
</dbReference>
<dbReference type="GO" id="GO:0004683">
    <property type="term" value="F:calcium/calmodulin-dependent protein kinase activity"/>
    <property type="evidence" value="ECO:0000318"/>
    <property type="project" value="GO_Central"/>
</dbReference>
<dbReference type="GO" id="GO:0005516">
    <property type="term" value="F:calmodulin binding"/>
    <property type="evidence" value="ECO:0000318"/>
    <property type="project" value="GO_Central"/>
</dbReference>
<dbReference type="GO" id="GO:0046872">
    <property type="term" value="F:metal ion binding"/>
    <property type="evidence" value="ECO:0007669"/>
    <property type="project" value="UniProtKB-KW"/>
</dbReference>
<dbReference type="GO" id="GO:0106310">
    <property type="term" value="F:protein serine kinase activity"/>
    <property type="evidence" value="ECO:0007669"/>
    <property type="project" value="RHEA"/>
</dbReference>
<dbReference type="GO" id="GO:0035556">
    <property type="term" value="P:intracellular signal transduction"/>
    <property type="evidence" value="ECO:0000318"/>
    <property type="project" value="GO_Central"/>
</dbReference>
<dbReference type="GO" id="GO:0006417">
    <property type="term" value="P:regulation of translation"/>
    <property type="evidence" value="ECO:0007669"/>
    <property type="project" value="UniProtKB-KW"/>
</dbReference>
<dbReference type="CDD" id="cd14174">
    <property type="entry name" value="STKc_Mnk1"/>
    <property type="match status" value="1"/>
</dbReference>
<dbReference type="FunFam" id="1.10.510.10:FF:000119">
    <property type="entry name" value="Putative map kinase-interacting serine/threonine-protein kinase 1"/>
    <property type="match status" value="1"/>
</dbReference>
<dbReference type="FunFam" id="3.30.200.20:FF:000093">
    <property type="entry name" value="Putative map kinase-interacting serine/threonine-protein kinase 1"/>
    <property type="match status" value="1"/>
</dbReference>
<dbReference type="Gene3D" id="3.30.200.20">
    <property type="entry name" value="Phosphorylase Kinase, domain 1"/>
    <property type="match status" value="1"/>
</dbReference>
<dbReference type="Gene3D" id="1.10.510.10">
    <property type="entry name" value="Transferase(Phosphotransferase) domain 1"/>
    <property type="match status" value="1"/>
</dbReference>
<dbReference type="InterPro" id="IPR050205">
    <property type="entry name" value="CDPK_Ser/Thr_kinases"/>
</dbReference>
<dbReference type="InterPro" id="IPR011009">
    <property type="entry name" value="Kinase-like_dom_sf"/>
</dbReference>
<dbReference type="InterPro" id="IPR000719">
    <property type="entry name" value="Prot_kinase_dom"/>
</dbReference>
<dbReference type="InterPro" id="IPR017441">
    <property type="entry name" value="Protein_kinase_ATP_BS"/>
</dbReference>
<dbReference type="InterPro" id="IPR008271">
    <property type="entry name" value="Ser/Thr_kinase_AS"/>
</dbReference>
<dbReference type="PANTHER" id="PTHR24349">
    <property type="entry name" value="SERINE/THREONINE-PROTEIN KINASE"/>
    <property type="match status" value="1"/>
</dbReference>
<dbReference type="Pfam" id="PF00069">
    <property type="entry name" value="Pkinase"/>
    <property type="match status" value="1"/>
</dbReference>
<dbReference type="SMART" id="SM00220">
    <property type="entry name" value="S_TKc"/>
    <property type="match status" value="1"/>
</dbReference>
<dbReference type="SUPFAM" id="SSF56112">
    <property type="entry name" value="Protein kinase-like (PK-like)"/>
    <property type="match status" value="1"/>
</dbReference>
<dbReference type="PROSITE" id="PS00107">
    <property type="entry name" value="PROTEIN_KINASE_ATP"/>
    <property type="match status" value="1"/>
</dbReference>
<dbReference type="PROSITE" id="PS50011">
    <property type="entry name" value="PROTEIN_KINASE_DOM"/>
    <property type="match status" value="1"/>
</dbReference>
<dbReference type="PROSITE" id="PS00108">
    <property type="entry name" value="PROTEIN_KINASE_ST"/>
    <property type="match status" value="1"/>
</dbReference>
<organism>
    <name type="scientific">Xenopus laevis</name>
    <name type="common">African clawed frog</name>
    <dbReference type="NCBI Taxonomy" id="8355"/>
    <lineage>
        <taxon>Eukaryota</taxon>
        <taxon>Metazoa</taxon>
        <taxon>Chordata</taxon>
        <taxon>Craniata</taxon>
        <taxon>Vertebrata</taxon>
        <taxon>Euteleostomi</taxon>
        <taxon>Amphibia</taxon>
        <taxon>Batrachia</taxon>
        <taxon>Anura</taxon>
        <taxon>Pipoidea</taxon>
        <taxon>Pipidae</taxon>
        <taxon>Xenopodinae</taxon>
        <taxon>Xenopus</taxon>
        <taxon>Xenopus</taxon>
    </lineage>
</organism>
<proteinExistence type="evidence at transcript level"/>
<name>MKNK1_XENLA</name>
<feature type="chain" id="PRO_0000226970" description="MAP kinase-interacting serine/threonine-protein kinase 1">
    <location>
        <begin position="1"/>
        <end position="418"/>
    </location>
</feature>
<feature type="domain" description="Protein kinase" evidence="3">
    <location>
        <begin position="37"/>
        <end position="321"/>
    </location>
</feature>
<feature type="region of interest" description="Disordered" evidence="5">
    <location>
        <begin position="1"/>
        <end position="23"/>
    </location>
</feature>
<feature type="region of interest" description="Disordered" evidence="5">
    <location>
        <begin position="384"/>
        <end position="418"/>
    </location>
</feature>
<feature type="compositionally biased region" description="Basic residues" evidence="5">
    <location>
        <begin position="389"/>
        <end position="403"/>
    </location>
</feature>
<feature type="compositionally biased region" description="Polar residues" evidence="5">
    <location>
        <begin position="406"/>
        <end position="418"/>
    </location>
</feature>
<feature type="active site" description="Proton acceptor" evidence="3 4">
    <location>
        <position position="158"/>
    </location>
</feature>
<feature type="binding site" evidence="3">
    <location>
        <begin position="43"/>
        <end position="51"/>
    </location>
    <ligand>
        <name>ATP</name>
        <dbReference type="ChEBI" id="CHEBI:30616"/>
    </ligand>
</feature>
<feature type="binding site" evidence="3">
    <location>
        <position position="66"/>
    </location>
    <ligand>
        <name>ATP</name>
        <dbReference type="ChEBI" id="CHEBI:30616"/>
    </ligand>
</feature>
<protein>
    <recommendedName>
        <fullName>MAP kinase-interacting serine/threonine-protein kinase 1</fullName>
        <ecNumber evidence="2">2.7.11.1</ecNumber>
    </recommendedName>
    <alternativeName>
        <fullName>MAP kinase signal-integrating kinase 1</fullName>
        <shortName>MAPK signal-integrating kinase 1</shortName>
        <shortName>Mnk1</shortName>
    </alternativeName>
</protein>
<evidence type="ECO:0000250" key="1"/>
<evidence type="ECO:0000250" key="2">
    <source>
        <dbReference type="UniProtKB" id="Q9BUB5"/>
    </source>
</evidence>
<evidence type="ECO:0000255" key="3">
    <source>
        <dbReference type="PROSITE-ProRule" id="PRU00159"/>
    </source>
</evidence>
<evidence type="ECO:0000255" key="4">
    <source>
        <dbReference type="PROSITE-ProRule" id="PRU10027"/>
    </source>
</evidence>
<evidence type="ECO:0000256" key="5">
    <source>
        <dbReference type="SAM" id="MobiDB-lite"/>
    </source>
</evidence>
<evidence type="ECO:0000305" key="6"/>
<reference key="1">
    <citation type="submission" date="1999-02" db="EMBL/GenBank/DDBJ databases">
        <title>cDNA cloning of Xenopus MNK1 and its biological activity in oocytes.</title>
        <authorList>
            <person name="Ono Y."/>
            <person name="Iwashita J."/>
            <person name="Sagata N."/>
        </authorList>
    </citation>
    <scope>NUCLEOTIDE SEQUENCE [MRNA]</scope>
</reference>
<reference key="2">
    <citation type="submission" date="2004-08" db="EMBL/GenBank/DDBJ databases">
        <authorList>
            <consortium name="NIH - Xenopus Gene Collection (XGC) project"/>
        </authorList>
    </citation>
    <scope>NUCLEOTIDE SEQUENCE [LARGE SCALE MRNA]</scope>
    <source>
        <tissue>Kidney</tissue>
    </source>
</reference>